<proteinExistence type="evidence at protein level"/>
<comment type="function">
    <text evidence="5">Required for the synthesis of chitin.</text>
</comment>
<comment type="catalytic activity">
    <reaction evidence="8">
        <text>[(1-&gt;4)-N-acetyl-beta-D-glucosaminyl](n) + UDP-N-acetyl-alpha-D-glucosamine = [(1-&gt;4)-N-acetyl-beta-D-glucosaminyl](n+1) + UDP + H(+)</text>
        <dbReference type="Rhea" id="RHEA:16637"/>
        <dbReference type="Rhea" id="RHEA-COMP:9593"/>
        <dbReference type="Rhea" id="RHEA-COMP:9595"/>
        <dbReference type="ChEBI" id="CHEBI:15378"/>
        <dbReference type="ChEBI" id="CHEBI:17029"/>
        <dbReference type="ChEBI" id="CHEBI:57705"/>
        <dbReference type="ChEBI" id="CHEBI:58223"/>
        <dbReference type="EC" id="2.4.1.16"/>
    </reaction>
</comment>
<comment type="subcellular location">
    <subcellularLocation>
        <location evidence="8">Cell membrane</location>
        <topology evidence="1">Multi-pass membrane protein</topology>
    </subcellularLocation>
</comment>
<comment type="developmental stage">
    <text evidence="4 5">Expressed in eggs (PubMed:11589574, PubMed:15777697). Not expressed in hatched second-stage juveniles or in young females (PubMed:15777697).</text>
</comment>
<comment type="PTM">
    <text evidence="8">May require proteolytic cleavage for activation.</text>
</comment>
<comment type="disruption phenotype">
    <text evidence="5">RNAi-mediated knockdown causes a delay in egg hatching.</text>
</comment>
<comment type="similarity">
    <text evidence="7">Belongs to the chitin synthase family. Class IV subfamily.</text>
</comment>
<name>CHS_MELAT</name>
<accession>Q8T5G8</accession>
<protein>
    <recommendedName>
        <fullName evidence="6">Chitin synthase</fullName>
        <ecNumber evidence="8">2.4.1.16</ecNumber>
    </recommendedName>
    <alternativeName>
        <fullName evidence="7">Chitin-UDP acetyl-glucosaminyl transferase</fullName>
    </alternativeName>
</protein>
<feature type="chain" id="PRO_0000443250" description="Chitin synthase">
    <location>
        <begin position="1"/>
        <end position="1851"/>
    </location>
</feature>
<feature type="topological domain" description="Cytoplasmic" evidence="7">
    <location>
        <begin position="1"/>
        <end position="108"/>
    </location>
</feature>
<feature type="transmembrane region" description="Helical" evidence="1">
    <location>
        <begin position="109"/>
        <end position="129"/>
    </location>
</feature>
<feature type="topological domain" description="Extracellular" evidence="7">
    <location>
        <begin position="130"/>
        <end position="168"/>
    </location>
</feature>
<feature type="transmembrane region" description="Helical" evidence="1">
    <location>
        <begin position="169"/>
        <end position="189"/>
    </location>
</feature>
<feature type="topological domain" description="Cytoplasmic" evidence="7">
    <location>
        <begin position="190"/>
        <end position="208"/>
    </location>
</feature>
<feature type="transmembrane region" description="Helical" evidence="1">
    <location>
        <begin position="209"/>
        <end position="229"/>
    </location>
</feature>
<feature type="topological domain" description="Extracellular" evidence="7">
    <location>
        <begin position="230"/>
        <end position="234"/>
    </location>
</feature>
<feature type="transmembrane region" description="Helical" evidence="1">
    <location>
        <begin position="235"/>
        <end position="255"/>
    </location>
</feature>
<feature type="topological domain" description="Cytoplasmic" evidence="7">
    <location>
        <begin position="256"/>
        <end position="261"/>
    </location>
</feature>
<feature type="transmembrane region" description="Helical" evidence="1">
    <location>
        <begin position="262"/>
        <end position="282"/>
    </location>
</feature>
<feature type="topological domain" description="Extracellular" evidence="7">
    <location>
        <begin position="283"/>
        <end position="291"/>
    </location>
</feature>
<feature type="transmembrane region" description="Helical" evidence="1">
    <location>
        <begin position="292"/>
        <end position="312"/>
    </location>
</feature>
<feature type="topological domain" description="Cytoplasmic" evidence="7">
    <location>
        <begin position="313"/>
        <end position="337"/>
    </location>
</feature>
<feature type="transmembrane region" description="Helical" evidence="1">
    <location>
        <begin position="338"/>
        <end position="358"/>
    </location>
</feature>
<feature type="topological domain" description="Extracellular" evidence="7">
    <location>
        <begin position="359"/>
        <end position="544"/>
    </location>
</feature>
<feature type="transmembrane region" description="Helical" evidence="1">
    <location>
        <begin position="545"/>
        <end position="565"/>
    </location>
</feature>
<feature type="topological domain" description="Cytoplasmic" evidence="7">
    <location>
        <begin position="566"/>
        <end position="573"/>
    </location>
</feature>
<feature type="transmembrane region" description="Helical" evidence="1">
    <location>
        <begin position="574"/>
        <end position="594"/>
    </location>
</feature>
<feature type="topological domain" description="Extracellular" evidence="7">
    <location>
        <begin position="595"/>
        <end position="631"/>
    </location>
</feature>
<feature type="transmembrane region" description="Helical" evidence="1">
    <location>
        <begin position="632"/>
        <end position="652"/>
    </location>
</feature>
<feature type="topological domain" description="Cytoplasmic" evidence="7">
    <location>
        <begin position="653"/>
        <end position="1124"/>
    </location>
</feature>
<feature type="transmembrane region" description="Helical" evidence="1">
    <location>
        <begin position="1125"/>
        <end position="1145"/>
    </location>
</feature>
<feature type="topological domain" description="Extracellular" evidence="7">
    <location>
        <begin position="1146"/>
        <end position="1154"/>
    </location>
</feature>
<feature type="transmembrane region" description="Helical" evidence="1">
    <location>
        <begin position="1155"/>
        <end position="1175"/>
    </location>
</feature>
<feature type="topological domain" description="Cytoplasmic" evidence="7">
    <location>
        <begin position="1176"/>
        <end position="1179"/>
    </location>
</feature>
<feature type="transmembrane region" description="Helical" evidence="1">
    <location>
        <begin position="1180"/>
        <end position="1200"/>
    </location>
</feature>
<feature type="topological domain" description="Extracellular" evidence="7">
    <location>
        <begin position="1201"/>
        <end position="1209"/>
    </location>
</feature>
<feature type="transmembrane region" description="Helical" evidence="1">
    <location>
        <begin position="1210"/>
        <end position="1230"/>
    </location>
</feature>
<feature type="topological domain" description="Cytoplasmic" evidence="7">
    <location>
        <begin position="1231"/>
        <end position="1235"/>
    </location>
</feature>
<feature type="transmembrane region" description="Helical" evidence="1">
    <location>
        <begin position="1236"/>
        <end position="1256"/>
    </location>
</feature>
<feature type="topological domain" description="Extracellular" evidence="7">
    <location>
        <begin position="1257"/>
        <end position="1461"/>
    </location>
</feature>
<feature type="transmembrane region" description="Helical" evidence="1">
    <location>
        <begin position="1462"/>
        <end position="1482"/>
    </location>
</feature>
<feature type="topological domain" description="Cytoplasmic" evidence="7">
    <location>
        <begin position="1483"/>
        <end position="1527"/>
    </location>
</feature>
<feature type="transmembrane region" description="Helical" evidence="1">
    <location>
        <begin position="1528"/>
        <end position="1548"/>
    </location>
</feature>
<feature type="topological domain" description="Extracellular" evidence="7">
    <location>
        <begin position="1549"/>
        <end position="1851"/>
    </location>
</feature>
<feature type="region of interest" description="Disordered" evidence="3">
    <location>
        <begin position="1"/>
        <end position="21"/>
    </location>
</feature>
<feature type="region of interest" description="Disordered" evidence="3">
    <location>
        <begin position="432"/>
        <end position="522"/>
    </location>
</feature>
<feature type="region of interest" description="Disordered" evidence="3">
    <location>
        <begin position="693"/>
        <end position="718"/>
    </location>
</feature>
<feature type="region of interest" description="Disordered" evidence="3">
    <location>
        <begin position="1350"/>
        <end position="1402"/>
    </location>
</feature>
<feature type="region of interest" description="Disordered" evidence="3">
    <location>
        <begin position="1626"/>
        <end position="1658"/>
    </location>
</feature>
<feature type="region of interest" description="Disordered" evidence="3">
    <location>
        <begin position="1765"/>
        <end position="1851"/>
    </location>
</feature>
<feature type="coiled-coil region" evidence="1">
    <location>
        <begin position="1329"/>
        <end position="1383"/>
    </location>
</feature>
<feature type="compositionally biased region" description="Basic and acidic residues" evidence="3">
    <location>
        <begin position="442"/>
        <end position="454"/>
    </location>
</feature>
<feature type="compositionally biased region" description="Basic residues" evidence="3">
    <location>
        <begin position="455"/>
        <end position="465"/>
    </location>
</feature>
<feature type="compositionally biased region" description="Low complexity" evidence="3">
    <location>
        <begin position="466"/>
        <end position="478"/>
    </location>
</feature>
<feature type="compositionally biased region" description="Acidic residues" evidence="3">
    <location>
        <begin position="513"/>
        <end position="522"/>
    </location>
</feature>
<feature type="compositionally biased region" description="Acidic residues" evidence="3">
    <location>
        <begin position="696"/>
        <end position="711"/>
    </location>
</feature>
<feature type="compositionally biased region" description="Acidic residues" evidence="3">
    <location>
        <begin position="1364"/>
        <end position="1373"/>
    </location>
</feature>
<feature type="compositionally biased region" description="Basic and acidic residues" evidence="3">
    <location>
        <begin position="1374"/>
        <end position="1402"/>
    </location>
</feature>
<feature type="compositionally biased region" description="Basic and acidic residues" evidence="3">
    <location>
        <begin position="1637"/>
        <end position="1648"/>
    </location>
</feature>
<feature type="compositionally biased region" description="Basic and acidic residues" evidence="3">
    <location>
        <begin position="1781"/>
        <end position="1822"/>
    </location>
</feature>
<feature type="compositionally biased region" description="Basic residues" evidence="3">
    <location>
        <begin position="1823"/>
        <end position="1834"/>
    </location>
</feature>
<feature type="glycosylation site" description="N-linked (GlcNAc...) asparagine" evidence="2">
    <location>
        <position position="146"/>
    </location>
</feature>
<feature type="glycosylation site" description="N-linked (GlcNAc...) asparagine" evidence="2">
    <location>
        <position position="385"/>
    </location>
</feature>
<feature type="glycosylation site" description="N-linked (GlcNAc...) asparagine" evidence="2">
    <location>
        <position position="435"/>
    </location>
</feature>
<feature type="glycosylation site" description="N-linked (GlcNAc...) asparagine" evidence="2">
    <location>
        <position position="469"/>
    </location>
</feature>
<feature type="glycosylation site" description="N-linked (GlcNAc...) asparagine" evidence="2">
    <location>
        <position position="474"/>
    </location>
</feature>
<feature type="glycosylation site" description="N-linked (GlcNAc...) asparagine" evidence="2">
    <location>
        <position position="1274"/>
    </location>
</feature>
<feature type="glycosylation site" description="N-linked (GlcNAc...) asparagine" evidence="2">
    <location>
        <position position="1660"/>
    </location>
</feature>
<reference evidence="9" key="1">
    <citation type="journal article" date="2001" name="Mol. Genet. Genomics">
        <title>Nematode chitin synthases: gene structure, expression and function in Caenorhabditis elegans and the plant parasitic nematode Meloidogyne artiellia.</title>
        <authorList>
            <person name="Veronico P."/>
            <person name="Gray L.J."/>
            <person name="Jones J.T."/>
            <person name="Bazzicalupo P."/>
            <person name="Arbucci S."/>
            <person name="Cortese M.R."/>
            <person name="Di Vito M."/>
            <person name="De Giorgi C."/>
        </authorList>
    </citation>
    <scope>NUCLEOTIDE SEQUENCE [GENOMIC DNA]</scope>
    <scope>DEVELOPMENTAL STAGE</scope>
</reference>
<reference evidence="7" key="2">
    <citation type="journal article" date="2005" name="Gene">
        <title>Analysis of chitin synthase function in a plant parasitic nematode, Meloidogyne artiellia, using RNAi.</title>
        <authorList>
            <person name="Fanelli E."/>
            <person name="Di Vito M."/>
            <person name="Jones J.T."/>
            <person name="De Giorgi C."/>
        </authorList>
    </citation>
    <scope>FUNCTION</scope>
    <scope>CATALYTIC ACTIVITY</scope>
    <scope>DEVELOPMENTAL STAGE</scope>
    <scope>PROTEOLYTIC CLEAVAGE</scope>
    <scope>DISRUPTION PHENOTYPE</scope>
</reference>
<sequence length="1851" mass="210667">MQYHQHQHQFPGPGPSHTSVYSSDGFSCSMESIPLPEHLQQRNPPMEEHYLQQTILPTRVPESTVAKAREIVLSHITSQEHLPWDTFRLLPPKADRHQKDTLYNGFLQVLKMITFVALFVTTLGSSILAKLSLLVMAAGLGQAGHNISICPDKIPESPKNSVLISPKNAAKWAWALLLAICIPELLCFARSLHRSLFRKVRGPSFLQFLLVFTVESVHAFGLGALVFAIMPRGMVITMLQLGNSLCLIPSLLLPLSRSRSRWLPLLLLLDGSAILAQSSAAIWRGSIPLERFGFVFLCTSLISIAWWQNFVHPHSFLPATRFFAHYAAKLRECRSKTFVVLSPWKCLIFTFCMFQFVPPQIPFRELLQKDPFGEKLVTINAYNLNQSQLNAFQERMENLERKAFHQQHPHIVHPLKLNRKIVENIANGEAALFRNGTRRPPKKEEVKKNKMDSKKKTKKLKKKKGGNNNATSTNSSEKTPTKGGVLPTKRERRTMAATGSNERVEADYSSNSDADEQEEEEENVAAYNIYDDRVELNQFTTANDALWLVFVQAGSVLLCQLCAKFACKVVMQRVGLALPVVLSIPFGILFLAYSCRQKATNPCHLSEWMSKELFWQCPTRPFHWQRFFREQPNLLWLCWWLSQCWITIHLWLPRQERLAKSEKLFVLGYIDAPFPEHSIALDRRRDDKIQIRSEDIDTEEEANEGGGEQEDGNSSTHTCESAASGLVVVEAPFPKHPNVGRPTAASICSNGSLSSGSHRSDDGGLIRELPSSADSVCKIYVCATMWHESALEMGCMLKSIFRLDKDQCARRNAQRYLKVVDPDYYVFEAHIYIDDAFELDENGNPHPNKFVHQLLEKMDEAASTKLQLRTPRICVTSYGGRISYVLPWRNRLSIHLKNKLLIRQRKRWSQVMYLYFLLGFRLMLRVHEQKRRELLAENTFILTLDGDVDFQPECVHLLVDLMRKNRRLGAACGRIHPRGSGLMVWYQKFEYAVGHWLQKATEHMIGCVLCSPGCFSLFRSSALIDDNVARKYATKSEKPFHYVQYDQGEDRWLCTLLLQRGYRVEYCAASDALTFAPEGFSEFFNQRRRWIPSTMANVIDLLRDYRNVVRVNDSVSIWYIAYQLVMLFSSVLGPGTIFLMIVGAISISFNIDTRLALLIVTTPVLCFCVCCLTCGTETQLLLAQVIGALFAMLMTAVIVGTSLQIQKDGLLSPHSIFLFTVLGSWSFSALLHPLEFGCLLPCGLYFLAIPCMYMLLPVYSLCNLNTVSWGTRENASVSSSSTGQFSGKREERGDILPHLQKTEDGELSVGCGNFCRVVCCVRNPSSPPCADETVEVRKLDENFRKIERKLQSLERRTNGQGNNAEEEGKEEEETGKSEQERKEGREEGKEEEGKMSKRKKEEMDLKGWMELEPFRRFEPIVLDTEEESFWREMIEKYLRPILPNSNEQARIQRGLNELRNTCCSAFFMVNIVFIIVVLVLQLQKDCLHIEWPLGPLVNQTRVQCGGGGGRDFEGEEWIMSRLQLEPMGFVFIVFFLIILFIQFLAMLFHRFGTFTHIIASTELCCAQRPLDKLSEEELVAQNAVEIVRELQAIRGIDSSLSRSEQFQQQPLQRQTRQHFPRTLSLGKRQQNAQIPPRCEKGGNERGEESPTSLPAPPVINWSEVHRNHQRVQPMEGGQQFDPRKDTLDAAFRQRFFALSSSSIAADHHQNNGGHLVDTTGTGHIGAAALPLTLNRRTLRALEQRRNILYQRGDRKRIPALNQQFHSIFPSSSESEGEEGEGGGRGRGREQERDKCLEGKKEKFRQRVEEGPARCHRLEELFGKSRKGGPQKRGKVNGENMKFLGTTNKRAK</sequence>
<organism evidence="9">
    <name type="scientific">Meloidogyne artiellia</name>
    <name type="common">British root-knot nematode</name>
    <dbReference type="NCBI Taxonomy" id="42426"/>
    <lineage>
        <taxon>Eukaryota</taxon>
        <taxon>Metazoa</taxon>
        <taxon>Ecdysozoa</taxon>
        <taxon>Nematoda</taxon>
        <taxon>Chromadorea</taxon>
        <taxon>Rhabditida</taxon>
        <taxon>Tylenchina</taxon>
        <taxon>Tylenchomorpha</taxon>
        <taxon>Tylenchoidea</taxon>
        <taxon>Meloidogynidae</taxon>
        <taxon>Meloidogyninae</taxon>
        <taxon>Meloidogyne</taxon>
    </lineage>
</organism>
<evidence type="ECO:0000255" key="1"/>
<evidence type="ECO:0000255" key="2">
    <source>
        <dbReference type="PROSITE-ProRule" id="PRU00498"/>
    </source>
</evidence>
<evidence type="ECO:0000256" key="3">
    <source>
        <dbReference type="SAM" id="MobiDB-lite"/>
    </source>
</evidence>
<evidence type="ECO:0000269" key="4">
    <source>
    </source>
</evidence>
<evidence type="ECO:0000269" key="5">
    <source>
    </source>
</evidence>
<evidence type="ECO:0000303" key="6">
    <source>
    </source>
</evidence>
<evidence type="ECO:0000305" key="7"/>
<evidence type="ECO:0000305" key="8">
    <source>
    </source>
</evidence>
<evidence type="ECO:0000312" key="9">
    <source>
        <dbReference type="EMBL" id="AAG40111.1"/>
    </source>
</evidence>
<dbReference type="EC" id="2.4.1.16" evidence="8"/>
<dbReference type="EMBL" id="AY013285">
    <property type="protein sequence ID" value="AAG40111.1"/>
    <property type="molecule type" value="Genomic_DNA"/>
</dbReference>
<dbReference type="CAZy" id="GT2">
    <property type="family name" value="Glycosyltransferase Family 2"/>
</dbReference>
<dbReference type="GO" id="GO:0005886">
    <property type="term" value="C:plasma membrane"/>
    <property type="evidence" value="ECO:0007669"/>
    <property type="project" value="UniProtKB-SubCell"/>
</dbReference>
<dbReference type="GO" id="GO:0004100">
    <property type="term" value="F:chitin synthase activity"/>
    <property type="evidence" value="ECO:0000314"/>
    <property type="project" value="UniProtKB"/>
</dbReference>
<dbReference type="GO" id="GO:0006031">
    <property type="term" value="P:chitin biosynthetic process"/>
    <property type="evidence" value="ECO:0007669"/>
    <property type="project" value="TreeGrafter"/>
</dbReference>
<dbReference type="GO" id="GO:0009792">
    <property type="term" value="P:embryo development ending in birth or egg hatching"/>
    <property type="evidence" value="ECO:0000315"/>
    <property type="project" value="UniProtKB"/>
</dbReference>
<dbReference type="CDD" id="cd04190">
    <property type="entry name" value="Chitin_synth_C"/>
    <property type="match status" value="1"/>
</dbReference>
<dbReference type="FunFam" id="3.90.550.10:FF:000139">
    <property type="entry name" value="Chitin synthase 8"/>
    <property type="match status" value="1"/>
</dbReference>
<dbReference type="Gene3D" id="3.90.550.10">
    <property type="entry name" value="Spore Coat Polysaccharide Biosynthesis Protein SpsA, Chain A"/>
    <property type="match status" value="1"/>
</dbReference>
<dbReference type="InterPro" id="IPR004835">
    <property type="entry name" value="Chitin_synth"/>
</dbReference>
<dbReference type="InterPro" id="IPR029044">
    <property type="entry name" value="Nucleotide-diphossugar_trans"/>
</dbReference>
<dbReference type="PANTHER" id="PTHR22914">
    <property type="entry name" value="CHITIN SYNTHASE"/>
    <property type="match status" value="1"/>
</dbReference>
<dbReference type="PANTHER" id="PTHR22914:SF42">
    <property type="entry name" value="CHITIN SYNTHASE"/>
    <property type="match status" value="1"/>
</dbReference>
<dbReference type="Pfam" id="PF03142">
    <property type="entry name" value="Chitin_synth_2"/>
    <property type="match status" value="1"/>
</dbReference>
<dbReference type="SUPFAM" id="SSF53448">
    <property type="entry name" value="Nucleotide-diphospho-sugar transferases"/>
    <property type="match status" value="1"/>
</dbReference>
<keyword id="KW-1003">Cell membrane</keyword>
<keyword id="KW-0175">Coiled coil</keyword>
<keyword id="KW-0325">Glycoprotein</keyword>
<keyword id="KW-0328">Glycosyltransferase</keyword>
<keyword id="KW-0472">Membrane</keyword>
<keyword id="KW-0808">Transferase</keyword>
<keyword id="KW-0812">Transmembrane</keyword>
<keyword id="KW-1133">Transmembrane helix</keyword>